<keyword id="KW-0002">3D-structure</keyword>
<keyword id="KW-0007">Acetylation</keyword>
<keyword id="KW-0025">Alternative splicing</keyword>
<keyword id="KW-1017">Isopeptide bond</keyword>
<keyword id="KW-0597">Phosphoprotein</keyword>
<keyword id="KW-0646">Protease inhibitor</keyword>
<keyword id="KW-1185">Reference proteome</keyword>
<keyword id="KW-0677">Repeat</keyword>
<keyword id="KW-0789">Thiol protease inhibitor</keyword>
<keyword id="KW-0832">Ubl conjugation</keyword>
<evidence type="ECO:0000250" key="1">
    <source>
        <dbReference type="UniProtKB" id="P20810"/>
    </source>
</evidence>
<evidence type="ECO:0000250" key="2">
    <source>
        <dbReference type="UniProtKB" id="P51125"/>
    </source>
</evidence>
<evidence type="ECO:0000256" key="3">
    <source>
        <dbReference type="SAM" id="MobiDB-lite"/>
    </source>
</evidence>
<evidence type="ECO:0000269" key="4">
    <source>
    </source>
</evidence>
<evidence type="ECO:0000303" key="5">
    <source>
    </source>
</evidence>
<evidence type="ECO:0000303" key="6">
    <source>
    </source>
</evidence>
<evidence type="ECO:0000303" key="7">
    <source>
    </source>
</evidence>
<evidence type="ECO:0000303" key="8">
    <source>
    </source>
</evidence>
<evidence type="ECO:0000303" key="9">
    <source ref="5"/>
</evidence>
<evidence type="ECO:0000305" key="10"/>
<evidence type="ECO:0007744" key="11">
    <source>
    </source>
</evidence>
<evidence type="ECO:0007829" key="12">
    <source>
        <dbReference type="PDB" id="3BOW"/>
    </source>
</evidence>
<evidence type="ECO:0007829" key="13">
    <source>
        <dbReference type="PDB" id="3DF0"/>
    </source>
</evidence>
<sequence length="713" mass="77313">MSRPGPKPAASSRPRRGAAASHTQEHVNEKNIGSSSKPAEKKGSDEVTASSAATGTSPRMSTTGAKAVKIESEKSQSSEPPVIHEKKPKGKPKEGSEPQTLPKHASDTGSKHAHKEKALSRSNEQIVSEKSSESKTKFQDAPSADGESVAGGVTVATASDKVVVKKKEKKSLTPTLPMESTLNKLSDKSGVNAALDDLIDTLGECEDTNKDDPPYTGPVVLDPMDSTYLEALGIKEGTIPPEYRKLLEKNEAITGPLPDSPKPMGIDHAIDALSSDFTCSSPTGKQTEKEKSTGESSKAQSAGVTRSAVPPQEKKRKVEEEVMNDQALQALSDSLGTRQPDPQSHLRQAKQVKEAKAKEERQEKCGEDEDTVPAEYRLKPAKDKDGKPLLPEPEETSKCLSESELIGELSADFVQPTYQEKPSMPAAKIKKGVVPDDAVETLARSLGTRKEDPEDEKSLVDKVKEKAKEEDHEKLGEKEETIPPDYRLEIVKDKDGKPLLPKEAEEQLPPLSDDFLLDALSQDFSSPANILSLGFEDAKLSAAVSETVSQVPAPSNHTAAPPPGTERRDKELDDALDELSDSLGQRQPDPDENKPLDDKVKEKIKAEHSEKLGERDDTIPPEYRHLLDNDGKDKPEKPLTKNTEKLGQDQDPIDALSEDLDSCPPTTETSQNTTKEKGKKTSSSKASKNEEKTKDSSKKTEEVPKPKVDEDAT</sequence>
<protein>
    <recommendedName>
        <fullName>Calpastatin</fullName>
    </recommendedName>
    <alternativeName>
        <fullName>Calpain inhibitor</fullName>
    </alternativeName>
</protein>
<reference key="1">
    <citation type="journal article" date="2007" name="Arch. Biochem. Biophys.">
        <title>Multiple rat brain calpastatin forms are produced by distinct starting points and alternative splicing of the N-terminal exons.</title>
        <authorList>
            <person name="De Tullio R."/>
            <person name="Averna M."/>
            <person name="Stifanese R."/>
            <person name="Parr T."/>
            <person name="Bardsley R.G."/>
            <person name="Pontremoli S."/>
            <person name="Melloni E."/>
        </authorList>
    </citation>
    <scope>NUCLEOTIDE SEQUENCE [MRNA] (ISOFORMS 1; 2; 3; 4; 5; 6 AND 7)</scope>
    <source>
        <strain>Sprague-Dawley</strain>
    </source>
</reference>
<reference key="2">
    <citation type="journal article" date="2004" name="Genome Res.">
        <title>The status, quality, and expansion of the NIH full-length cDNA project: the Mammalian Gene Collection (MGC).</title>
        <authorList>
            <consortium name="The MGC Project Team"/>
        </authorList>
    </citation>
    <scope>NUCLEOTIDE SEQUENCE [LARGE SCALE MRNA] (ISOFORM 2)</scope>
    <source>
        <tissue>Liver</tissue>
    </source>
</reference>
<reference key="3">
    <citation type="journal article" date="1991" name="Biochim. Biophys. Acta">
        <title>Rat calpastatin has diverged primary sequence from other mammalian calpastatins but retains functionally important sequences.</title>
        <authorList>
            <person name="Ishida S."/>
            <person name="Emori Y."/>
            <person name="Suzuki K."/>
        </authorList>
    </citation>
    <scope>NUCLEOTIDE SEQUENCE [MRNA] OF 55-713 (ISOFORM 1)</scope>
    <source>
        <tissue>Liver</tissue>
    </source>
</reference>
<reference key="4">
    <citation type="journal article" date="1998" name="FEBS Lett.">
        <title>Rat brain contains multiple mRNAs for calpastatin.</title>
        <authorList>
            <person name="De Tullio R."/>
            <person name="Sparatore B."/>
            <person name="Salamino F."/>
            <person name="Melloni E."/>
            <person name="Pontremoli S."/>
        </authorList>
    </citation>
    <scope>NUCLEOTIDE SEQUENCE [MRNA] OF 55-713 (ISOFORMS 1; 2 AND 5)</scope>
    <source>
        <strain>Sprague-Dawley</strain>
        <tissue>Brain</tissue>
    </source>
</reference>
<reference key="5">
    <citation type="submission" date="2001-02" db="EMBL/GenBank/DDBJ databases">
        <title>Hypoxic induction of two rat cardiac calpastatin cDNAs.</title>
        <authorList>
            <person name="Risbood M.P."/>
            <person name="Lin H."/>
            <person name="Lee T."/>
        </authorList>
    </citation>
    <scope>NUCLEOTIDE SEQUENCE [MRNA] OF 59-713 (ISOFORMS 1 AND 5)</scope>
    <source>
        <strain>Sprague-Dawley</strain>
        <tissue>Heart</tissue>
    </source>
</reference>
<reference key="6">
    <citation type="journal article" date="1992" name="Biochim. Biophys. Acta">
        <title>Multiple forms of rat calpastatin cDNA in the coding region of functionally unknown amino-terminal domain.</title>
        <authorList>
            <person name="Lee W.J."/>
            <person name="Hatanaka M."/>
            <person name="Maki M."/>
        </authorList>
    </citation>
    <scope>NUCLEOTIDE SEQUENCE [MRNA] OF 60-188 (ISOFORMS 1; 2 AND 4)</scope>
    <source>
        <strain>Fischer</strain>
    </source>
</reference>
<reference key="7">
    <citation type="journal article" date="2012" name="Nat. Commun.">
        <title>Quantitative maps of protein phosphorylation sites across 14 different rat organs and tissues.</title>
        <authorList>
            <person name="Lundby A."/>
            <person name="Secher A."/>
            <person name="Lage K."/>
            <person name="Nordsborg N.B."/>
            <person name="Dmytriyev A."/>
            <person name="Lundby C."/>
            <person name="Olsen J.V."/>
        </authorList>
    </citation>
    <scope>PHOSPHORYLATION [LARGE SCALE ANALYSIS] AT SER-57; SER-122; SER-171; THR-173; SER-260; SER-580 AND SER-582</scope>
    <scope>IDENTIFICATION BY MASS SPECTROMETRY [LARGE SCALE ANALYSIS]</scope>
</reference>
<reference key="8">
    <citation type="journal article" date="2008" name="Nature">
        <title>Concerted multi-pronged attack by calpastatin to occlude the catalytic cleft of heterodimeric calpains.</title>
        <authorList>
            <person name="Moldoveanu T."/>
            <person name="Gehring K."/>
            <person name="Green D.R."/>
        </authorList>
    </citation>
    <scope>X-RAY CRYSTALLOGRAPHY (2.95 ANGSTROMS) OF 193-278 IN COMPLEX WITH CAPN2 AND CAPNS1</scope>
</reference>
<reference key="9">
    <citation type="journal article" date="2008" name="Nature">
        <title>Calcium-bound structure of calpain and its mechanism of inhibition by calpastatin.</title>
        <authorList>
            <person name="Hanna R.A."/>
            <person name="Campbell R.L."/>
            <person name="Davies P.L."/>
        </authorList>
    </citation>
    <scope>X-RAY CRYSTALLOGRAPHY (2.4 ANGSTROMS) OF 571-664 IN COMPLEX WITH CAPN2 AND CAPNS1</scope>
    <scope>INHIBITORY DOMAINS</scope>
    <scope>MUTAGENESIS OF GLY-613</scope>
</reference>
<organism>
    <name type="scientific">Rattus norvegicus</name>
    <name type="common">Rat</name>
    <dbReference type="NCBI Taxonomy" id="10116"/>
    <lineage>
        <taxon>Eukaryota</taxon>
        <taxon>Metazoa</taxon>
        <taxon>Chordata</taxon>
        <taxon>Craniata</taxon>
        <taxon>Vertebrata</taxon>
        <taxon>Euteleostomi</taxon>
        <taxon>Mammalia</taxon>
        <taxon>Eutheria</taxon>
        <taxon>Euarchontoglires</taxon>
        <taxon>Glires</taxon>
        <taxon>Rodentia</taxon>
        <taxon>Myomorpha</taxon>
        <taxon>Muroidea</taxon>
        <taxon>Muridae</taxon>
        <taxon>Murinae</taxon>
        <taxon>Rattus</taxon>
    </lineage>
</organism>
<accession>P27321</accession>
<accession>A5GXY4</accession>
<accession>A5GXY5</accession>
<accession>A5GXY6</accession>
<accession>A5GXY7</accession>
<accession>A5GXY8</accession>
<accession>A5GXY9</accession>
<accession>A5GXZ7</accession>
<accession>O55151</accession>
<accession>O55152</accession>
<accession>O55153</accession>
<accession>Q5BK19</accession>
<accession>Q99MG1</accession>
<accession>Q99MG2</accession>
<dbReference type="EMBL" id="DQ186624">
    <property type="protein sequence ID" value="ABA86879.1"/>
    <property type="molecule type" value="mRNA"/>
</dbReference>
<dbReference type="EMBL" id="DQ186625">
    <property type="protein sequence ID" value="ABA86880.1"/>
    <property type="molecule type" value="mRNA"/>
</dbReference>
<dbReference type="EMBL" id="DQ186626">
    <property type="protein sequence ID" value="ABA86881.1"/>
    <property type="molecule type" value="mRNA"/>
</dbReference>
<dbReference type="EMBL" id="DQ186627">
    <property type="protein sequence ID" value="ABA86882.1"/>
    <property type="molecule type" value="mRNA"/>
</dbReference>
<dbReference type="EMBL" id="DQ186628">
    <property type="protein sequence ID" value="ABA86883.1"/>
    <property type="molecule type" value="mRNA"/>
</dbReference>
<dbReference type="EMBL" id="DQ186629">
    <property type="protein sequence ID" value="ABA86884.1"/>
    <property type="molecule type" value="mRNA"/>
</dbReference>
<dbReference type="EMBL" id="DQ287975">
    <property type="protein sequence ID" value="ABB90254.1"/>
    <property type="molecule type" value="mRNA"/>
</dbReference>
<dbReference type="EMBL" id="BC091239">
    <property type="protein sequence ID" value="AAH91239.1"/>
    <property type="molecule type" value="mRNA"/>
</dbReference>
<dbReference type="EMBL" id="X56729">
    <property type="protein sequence ID" value="CAA40053.1"/>
    <property type="status" value="ALT_SEQ"/>
    <property type="molecule type" value="mRNA"/>
</dbReference>
<dbReference type="EMBL" id="Y13587">
    <property type="protein sequence ID" value="CAA73915.1"/>
    <property type="status" value="ALT_INIT"/>
    <property type="molecule type" value="mRNA"/>
</dbReference>
<dbReference type="EMBL" id="Y13588">
    <property type="protein sequence ID" value="CAA73916.1"/>
    <property type="status" value="ALT_INIT"/>
    <property type="molecule type" value="mRNA"/>
</dbReference>
<dbReference type="EMBL" id="Y13589">
    <property type="protein sequence ID" value="CAA73917.1"/>
    <property type="status" value="ALT_INIT"/>
    <property type="molecule type" value="mRNA"/>
</dbReference>
<dbReference type="EMBL" id="AF346597">
    <property type="protein sequence ID" value="AAK29411.1"/>
    <property type="status" value="ALT_INIT"/>
    <property type="molecule type" value="mRNA"/>
</dbReference>
<dbReference type="EMBL" id="AF346598">
    <property type="protein sequence ID" value="AAK29412.1"/>
    <property type="status" value="ALT_INIT"/>
    <property type="molecule type" value="mRNA"/>
</dbReference>
<dbReference type="EMBL" id="X62520">
    <property type="protein sequence ID" value="CAA44386.1"/>
    <property type="molecule type" value="mRNA"/>
</dbReference>
<dbReference type="PIR" id="S15074">
    <property type="entry name" value="S15074"/>
</dbReference>
<dbReference type="PIR" id="S20611">
    <property type="entry name" value="S20611"/>
</dbReference>
<dbReference type="RefSeq" id="NP_001028887.1">
    <property type="nucleotide sequence ID" value="NM_001033715.1"/>
</dbReference>
<dbReference type="RefSeq" id="NP_001028888.1">
    <property type="nucleotide sequence ID" value="NM_001033716.1"/>
</dbReference>
<dbReference type="RefSeq" id="NP_445747.2">
    <property type="nucleotide sequence ID" value="NM_053295.2"/>
</dbReference>
<dbReference type="PDB" id="3BOW">
    <property type="method" value="X-ray"/>
    <property type="resolution" value="2.40 A"/>
    <property type="chains" value="C=571-664"/>
</dbReference>
<dbReference type="PDB" id="3DF0">
    <property type="method" value="X-ray"/>
    <property type="resolution" value="2.95 A"/>
    <property type="chains" value="C=193-278"/>
</dbReference>
<dbReference type="PDBsum" id="3BOW"/>
<dbReference type="PDBsum" id="3DF0"/>
<dbReference type="SMR" id="P27321"/>
<dbReference type="DIP" id="DIP-44338N"/>
<dbReference type="FunCoup" id="P27321">
    <property type="interactions" value="921"/>
</dbReference>
<dbReference type="IntAct" id="P27321">
    <property type="interactions" value="1"/>
</dbReference>
<dbReference type="MINT" id="P27321"/>
<dbReference type="STRING" id="10116.ENSRNOP00000058759"/>
<dbReference type="MEROPS" id="I27.001"/>
<dbReference type="MEROPS" id="I27.002"/>
<dbReference type="MEROPS" id="I27.003"/>
<dbReference type="iPTMnet" id="P27321"/>
<dbReference type="PhosphoSitePlus" id="P27321"/>
<dbReference type="jPOST" id="P27321"/>
<dbReference type="PaxDb" id="10116-ENSRNOP00000058759"/>
<dbReference type="PeptideAtlas" id="P27321"/>
<dbReference type="GeneID" id="25403"/>
<dbReference type="KEGG" id="rno:25403"/>
<dbReference type="AGR" id="RGD:2278"/>
<dbReference type="CTD" id="831"/>
<dbReference type="RGD" id="2278">
    <property type="gene designation" value="Cast"/>
</dbReference>
<dbReference type="eggNOG" id="ENOG502RHIZ">
    <property type="taxonomic scope" value="Eukaryota"/>
</dbReference>
<dbReference type="InParanoid" id="P27321"/>
<dbReference type="OrthoDB" id="89329at9989"/>
<dbReference type="PhylomeDB" id="P27321"/>
<dbReference type="Reactome" id="R-RNO-1474228">
    <property type="pathway name" value="Degradation of the extracellular matrix"/>
</dbReference>
<dbReference type="EvolutionaryTrace" id="P27321"/>
<dbReference type="PRO" id="PR:P27321"/>
<dbReference type="Proteomes" id="UP000002494">
    <property type="component" value="Unplaced"/>
</dbReference>
<dbReference type="GO" id="GO:0005737">
    <property type="term" value="C:cytoplasm"/>
    <property type="evidence" value="ECO:0000318"/>
    <property type="project" value="GO_Central"/>
</dbReference>
<dbReference type="GO" id="GO:0005829">
    <property type="term" value="C:cytosol"/>
    <property type="evidence" value="ECO:0000266"/>
    <property type="project" value="RGD"/>
</dbReference>
<dbReference type="GO" id="GO:0016020">
    <property type="term" value="C:membrane"/>
    <property type="evidence" value="ECO:0000314"/>
    <property type="project" value="ARUK-UCL"/>
</dbReference>
<dbReference type="GO" id="GO:0014069">
    <property type="term" value="C:postsynaptic density"/>
    <property type="evidence" value="ECO:0000314"/>
    <property type="project" value="ARUK-UCL"/>
</dbReference>
<dbReference type="GO" id="GO:0010859">
    <property type="term" value="F:calcium-dependent cysteine-type endopeptidase inhibitor activity"/>
    <property type="evidence" value="ECO:0000314"/>
    <property type="project" value="RGD"/>
</dbReference>
<dbReference type="GO" id="GO:0002020">
    <property type="term" value="F:protease binding"/>
    <property type="evidence" value="ECO:0000314"/>
    <property type="project" value="RGD"/>
</dbReference>
<dbReference type="GO" id="GO:0031100">
    <property type="term" value="P:animal organ regeneration"/>
    <property type="evidence" value="ECO:0000270"/>
    <property type="project" value="RGD"/>
</dbReference>
<dbReference type="GO" id="GO:0007343">
    <property type="term" value="P:egg activation"/>
    <property type="evidence" value="ECO:0000314"/>
    <property type="project" value="RGD"/>
</dbReference>
<dbReference type="GO" id="GO:0001889">
    <property type="term" value="P:liver development"/>
    <property type="evidence" value="ECO:0000270"/>
    <property type="project" value="RGD"/>
</dbReference>
<dbReference type="GO" id="GO:0045445">
    <property type="term" value="P:myoblast differentiation"/>
    <property type="evidence" value="ECO:0000270"/>
    <property type="project" value="RGD"/>
</dbReference>
<dbReference type="GO" id="GO:0007520">
    <property type="term" value="P:myoblast fusion"/>
    <property type="evidence" value="ECO:0000270"/>
    <property type="project" value="RGD"/>
</dbReference>
<dbReference type="GO" id="GO:2000675">
    <property type="term" value="P:negative regulation of type B pancreatic cell apoptotic process"/>
    <property type="evidence" value="ECO:0000266"/>
    <property type="project" value="RGD"/>
</dbReference>
<dbReference type="GO" id="GO:0030163">
    <property type="term" value="P:protein catabolic process"/>
    <property type="evidence" value="ECO:0000266"/>
    <property type="project" value="RGD"/>
</dbReference>
<dbReference type="GO" id="GO:0042176">
    <property type="term" value="P:regulation of protein catabolic process"/>
    <property type="evidence" value="ECO:0000304"/>
    <property type="project" value="RGD"/>
</dbReference>
<dbReference type="GO" id="GO:0014732">
    <property type="term" value="P:skeletal muscle atrophy"/>
    <property type="evidence" value="ECO:0000270"/>
    <property type="project" value="RGD"/>
</dbReference>
<dbReference type="DisProt" id="DP01994"/>
<dbReference type="InterPro" id="IPR026998">
    <property type="entry name" value="Calpastatin"/>
</dbReference>
<dbReference type="InterPro" id="IPR001259">
    <property type="entry name" value="Prot_inh_calpain"/>
</dbReference>
<dbReference type="PANTHER" id="PTHR10077">
    <property type="entry name" value="CALPASTATIN"/>
    <property type="match status" value="1"/>
</dbReference>
<dbReference type="PANTHER" id="PTHR10077:SF0">
    <property type="entry name" value="CALPASTATIN"/>
    <property type="match status" value="1"/>
</dbReference>
<dbReference type="Pfam" id="PF00748">
    <property type="entry name" value="Calpain_inhib"/>
    <property type="match status" value="3"/>
</dbReference>
<name>ICAL_RAT</name>
<comment type="function">
    <text>Specific inhibition of calpain (calcium-dependent cysteine protease). Plays a key role in postmortem tenderization of meat and have been proposed to be involved in muscle protein degradation in living tissue.</text>
</comment>
<comment type="interaction">
    <interactant intactId="EBI-7441624">
        <id>P27321</id>
    </interactant>
    <interactant intactId="EBI-1040438">
        <id>Q07009</id>
        <label>Capn2</label>
    </interactant>
    <organismsDiffer>false</organismsDiffer>
    <experiments>10</experiments>
</comment>
<comment type="alternative products">
    <event type="alternative splicing"/>
    <isoform>
        <id>P27321-1</id>
        <name>1</name>
        <name>A</name>
        <sequence type="displayed"/>
    </isoform>
    <isoform>
        <id>P27321-2</id>
        <name>2</name>
        <name>B</name>
        <sequence type="described" ref="VSP_000754"/>
    </isoform>
    <isoform>
        <id>P27321-3</id>
        <name>3</name>
        <name>C</name>
        <sequence type="described" ref="VSP_026972"/>
    </isoform>
    <isoform>
        <id>P27321-4</id>
        <name>4</name>
        <sequence type="described" ref="VSP_000753 VSP_000754"/>
    </isoform>
    <isoform>
        <id>P27321-5</id>
        <name>5</name>
        <sequence type="described" ref="VSP_000754 VSP_026972"/>
    </isoform>
    <isoform>
        <id>P27321-6</id>
        <name>6</name>
        <sequence type="described" ref="VSP_000753 VSP_000754 VSP_026972"/>
    </isoform>
    <isoform>
        <id>P27321-7</id>
        <name>7</name>
        <sequence type="described" ref="VSP_026971"/>
    </isoform>
</comment>
<comment type="domain">
    <text>Each of the four flexible inhibitory domains can inhibit one calcium-bound calpain molecule by occupying both sides of the active site.</text>
</comment>
<comment type="similarity">
    <text evidence="10">Belongs to the protease inhibitor I27 (calpastatin) family.</text>
</comment>
<comment type="sequence caution" evidence="10">
    <conflict type="erroneous initiation">
        <sequence resource="EMBL-CDS" id="AAK29411"/>
    </conflict>
</comment>
<comment type="sequence caution" evidence="10">
    <conflict type="erroneous initiation">
        <sequence resource="EMBL-CDS" id="AAK29412"/>
    </conflict>
</comment>
<comment type="sequence caution" evidence="10">
    <conflict type="erroneous initiation">
        <sequence resource="EMBL-CDS" id="CAA40053"/>
    </conflict>
    <text>Truncated N-terminus.</text>
</comment>
<comment type="sequence caution" evidence="10">
    <conflict type="frameshift">
        <sequence resource="EMBL-CDS" id="CAA40053"/>
    </conflict>
</comment>
<comment type="sequence caution" evidence="10">
    <conflict type="erroneous initiation">
        <sequence resource="EMBL-CDS" id="CAA73915"/>
    </conflict>
</comment>
<comment type="sequence caution" evidence="10">
    <conflict type="erroneous initiation">
        <sequence resource="EMBL-CDS" id="CAA73916"/>
    </conflict>
</comment>
<comment type="sequence caution" evidence="10">
    <conflict type="erroneous initiation">
        <sequence resource="EMBL-CDS" id="CAA73917"/>
    </conflict>
</comment>
<proteinExistence type="evidence at protein level"/>
<feature type="chain" id="PRO_0000147635" description="Calpastatin">
    <location>
        <begin position="1"/>
        <end position="713"/>
    </location>
</feature>
<feature type="repeat" description="Inhibitory domain 1">
    <location>
        <begin position="208"/>
        <end position="260"/>
    </location>
</feature>
<feature type="repeat" description="Inhibitory domain 2">
    <location>
        <begin position="341"/>
        <end position="393"/>
    </location>
</feature>
<feature type="repeat" description="Inhibitory domain 3">
    <location>
        <begin position="451"/>
        <end position="504"/>
    </location>
</feature>
<feature type="repeat" description="Inhibitory domain 4">
    <location>
        <begin position="588"/>
        <end position="641"/>
    </location>
</feature>
<feature type="region of interest" description="Disordered" evidence="3">
    <location>
        <begin position="1"/>
        <end position="152"/>
    </location>
</feature>
<feature type="region of interest" description="Disordered" evidence="3">
    <location>
        <begin position="253"/>
        <end position="402"/>
    </location>
</feature>
<feature type="region of interest" description="Disordered" evidence="3">
    <location>
        <begin position="442"/>
        <end position="507"/>
    </location>
</feature>
<feature type="region of interest" description="Disordered" evidence="3">
    <location>
        <begin position="544"/>
        <end position="713"/>
    </location>
</feature>
<feature type="compositionally biased region" description="Low complexity" evidence="3">
    <location>
        <begin position="1"/>
        <end position="21"/>
    </location>
</feature>
<feature type="compositionally biased region" description="Polar residues" evidence="3">
    <location>
        <begin position="47"/>
        <end position="64"/>
    </location>
</feature>
<feature type="compositionally biased region" description="Polar residues" evidence="3">
    <location>
        <begin position="120"/>
        <end position="129"/>
    </location>
</feature>
<feature type="compositionally biased region" description="Polar residues" evidence="3">
    <location>
        <begin position="275"/>
        <end position="285"/>
    </location>
</feature>
<feature type="compositionally biased region" description="Polar residues" evidence="3">
    <location>
        <begin position="294"/>
        <end position="304"/>
    </location>
</feature>
<feature type="compositionally biased region" description="Polar residues" evidence="3">
    <location>
        <begin position="326"/>
        <end position="346"/>
    </location>
</feature>
<feature type="compositionally biased region" description="Basic and acidic residues" evidence="3">
    <location>
        <begin position="351"/>
        <end position="365"/>
    </location>
</feature>
<feature type="compositionally biased region" description="Basic and acidic residues" evidence="3">
    <location>
        <begin position="376"/>
        <end position="387"/>
    </location>
</feature>
<feature type="compositionally biased region" description="Basic and acidic residues" evidence="3">
    <location>
        <begin position="448"/>
        <end position="505"/>
    </location>
</feature>
<feature type="compositionally biased region" description="Polar residues" evidence="3">
    <location>
        <begin position="544"/>
        <end position="558"/>
    </location>
</feature>
<feature type="compositionally biased region" description="Basic and acidic residues" evidence="3">
    <location>
        <begin position="588"/>
        <end position="648"/>
    </location>
</feature>
<feature type="compositionally biased region" description="Basic and acidic residues" evidence="3">
    <location>
        <begin position="687"/>
        <end position="713"/>
    </location>
</feature>
<feature type="modified residue" description="Phosphoserine" evidence="11">
    <location>
        <position position="57"/>
    </location>
</feature>
<feature type="modified residue" description="N6-acetyllysine" evidence="2">
    <location>
        <position position="86"/>
    </location>
</feature>
<feature type="modified residue" description="Phosphoserine" evidence="11">
    <location>
        <position position="122"/>
    </location>
</feature>
<feature type="modified residue" description="Phosphoserine" evidence="11">
    <location>
        <position position="171"/>
    </location>
</feature>
<feature type="modified residue" description="Phosphothreonine" evidence="11">
    <location>
        <position position="173"/>
    </location>
</feature>
<feature type="modified residue" description="Phosphoserine" evidence="11">
    <location>
        <position position="260"/>
    </location>
</feature>
<feature type="modified residue" description="Phosphoserine" evidence="1">
    <location>
        <position position="281"/>
    </location>
</feature>
<feature type="modified residue" description="Phosphoserine" evidence="1">
    <location>
        <position position="401"/>
    </location>
</feature>
<feature type="modified residue" description="Phosphoserine" evidence="1">
    <location>
        <position position="403"/>
    </location>
</feature>
<feature type="modified residue" description="Phosphoserine" evidence="1">
    <location>
        <position position="410"/>
    </location>
</feature>
<feature type="modified residue" description="Phosphoserine" evidence="1">
    <location>
        <position position="445"/>
    </location>
</feature>
<feature type="modified residue" description="Phosphoserine" evidence="1">
    <location>
        <position position="521"/>
    </location>
</feature>
<feature type="modified residue" description="Phosphoserine" evidence="1">
    <location>
        <position position="532"/>
    </location>
</feature>
<feature type="modified residue" description="Phosphoserine" evidence="11">
    <location>
        <position position="580"/>
    </location>
</feature>
<feature type="modified residue" description="Phosphoserine" evidence="11">
    <location>
        <position position="582"/>
    </location>
</feature>
<feature type="cross-link" description="Glycyl lysine isopeptide (Lys-Gly) (interchain with G-Cter in SUMO2)" evidence="1">
    <location>
        <position position="69"/>
    </location>
</feature>
<feature type="splice variant" id="VSP_026971" description="In isoform 7." evidence="7">
    <location>
        <begin position="1"/>
        <end position="177"/>
    </location>
</feature>
<feature type="splice variant" id="VSP_000753" description="In isoform 4 and isoform 6." evidence="6 7">
    <location>
        <begin position="67"/>
        <end position="79"/>
    </location>
</feature>
<feature type="splice variant" id="VSP_000754" description="In isoform 2, isoform 4, isoform 5 and isoform 6." evidence="5 6 7 8 9">
    <location>
        <begin position="98"/>
        <end position="135"/>
    </location>
</feature>
<feature type="splice variant" id="VSP_026972" description="In isoform 3, isoform 5 and isoform 6." evidence="7 8 9">
    <location>
        <begin position="166"/>
        <end position="188"/>
    </location>
</feature>
<feature type="mutagenesis site" description="2.9-fold increase in the IC(50)." evidence="4">
    <original>G</original>
    <variation>A</variation>
    <location>
        <position position="613"/>
    </location>
</feature>
<feature type="mutagenesis site" description="Turns CAST from an inhibitor into a substrate." evidence="4">
    <original>G</original>
    <variation>FG</variation>
    <location>
        <position position="613"/>
    </location>
</feature>
<feature type="sequence conflict" description="In Ref. 1; CAA40053 and 5; AAK29411." evidence="10" ref="1 5">
    <original>K</original>
    <variation>E</variation>
    <location>
        <position position="161"/>
    </location>
</feature>
<feature type="sequence conflict" description="In Ref. 4; CAA73917." evidence="10" ref="4">
    <original>N</original>
    <variation>S</variation>
    <location>
        <position position="209"/>
    </location>
</feature>
<feature type="sequence conflict" description="In Ref. 5; AAK29412." evidence="10" ref="5">
    <original>K</original>
    <variation>E</variation>
    <location>
        <position position="314"/>
    </location>
</feature>
<feature type="sequence conflict" description="In Ref. 1; ABA86879/ABA86880/ABA86881/ABA86882/ABA86883/ABA86884/ABB90254 and 4; CAA73916." evidence="10" ref="1 4">
    <original>V</original>
    <variation>G</variation>
    <location>
        <position position="463"/>
    </location>
</feature>
<feature type="sequence conflict" description="In Ref. 4; CAA73917." evidence="10" ref="4">
    <original>T</original>
    <variation>A</variation>
    <location>
        <position position="481"/>
    </location>
</feature>
<feature type="sequence conflict" description="In Ref. 4; CAA73917." evidence="10" ref="4">
    <original>D</original>
    <variation>G</variation>
    <location>
        <position position="518"/>
    </location>
</feature>
<feature type="sequence conflict" description="In Ref. 4; CAA73915." evidence="10" ref="4">
    <original>K</original>
    <variation>R</variation>
    <location>
        <position position="611"/>
    </location>
</feature>
<feature type="sequence conflict" description="In Ref. 2; AAH91239, 4; CAA73915/CAA73917 and 5; AAK29411/AAK29412." evidence="10" ref="2 4 5">
    <original>L</original>
    <variation>P</variation>
    <location>
        <position position="646"/>
    </location>
</feature>
<feature type="helix" evidence="13">
    <location>
        <begin position="195"/>
        <end position="199"/>
    </location>
</feature>
<feature type="helix" evidence="13">
    <location>
        <begin position="236"/>
        <end position="238"/>
    </location>
</feature>
<feature type="helix" evidence="13">
    <location>
        <begin position="241"/>
        <end position="247"/>
    </location>
</feature>
<feature type="helix" evidence="13">
    <location>
        <begin position="271"/>
        <end position="274"/>
    </location>
</feature>
<feature type="turn" evidence="13">
    <location>
        <begin position="275"/>
        <end position="277"/>
    </location>
</feature>
<feature type="helix" evidence="12">
    <location>
        <begin position="573"/>
        <end position="581"/>
    </location>
</feature>
<feature type="helix" evidence="12">
    <location>
        <begin position="616"/>
        <end position="618"/>
    </location>
</feature>
<feature type="helix" evidence="12">
    <location>
        <begin position="621"/>
        <end position="627"/>
    </location>
</feature>
<feature type="helix" evidence="12">
    <location>
        <begin position="652"/>
        <end position="659"/>
    </location>
</feature>
<gene>
    <name type="primary">Cast</name>
</gene>